<name>Y3663_BRUA4</name>
<accession>A6X565</accession>
<organism>
    <name type="scientific">Brucella anthropi (strain ATCC 49188 / DSM 6882 / CCUG 24695 / JCM 21032 / LMG 3331 / NBRC 15819 / NCTC 12168 / Alc 37)</name>
    <name type="common">Ochrobactrum anthropi</name>
    <dbReference type="NCBI Taxonomy" id="439375"/>
    <lineage>
        <taxon>Bacteria</taxon>
        <taxon>Pseudomonadati</taxon>
        <taxon>Pseudomonadota</taxon>
        <taxon>Alphaproteobacteria</taxon>
        <taxon>Hyphomicrobiales</taxon>
        <taxon>Brucellaceae</taxon>
        <taxon>Brucella/Ochrobactrum group</taxon>
        <taxon>Brucella</taxon>
    </lineage>
</organism>
<dbReference type="EMBL" id="CP000759">
    <property type="protein sequence ID" value="ABS16369.1"/>
    <property type="molecule type" value="Genomic_DNA"/>
</dbReference>
<dbReference type="RefSeq" id="WP_012093046.1">
    <property type="nucleotide sequence ID" value="NC_009668.1"/>
</dbReference>
<dbReference type="SMR" id="A6X565"/>
<dbReference type="STRING" id="439375.Oant_3663"/>
<dbReference type="KEGG" id="oan:Oant_3663"/>
<dbReference type="PATRIC" id="fig|439375.7.peg.3825"/>
<dbReference type="eggNOG" id="COG2220">
    <property type="taxonomic scope" value="Bacteria"/>
</dbReference>
<dbReference type="HOGENOM" id="CLU_070010_4_0_5"/>
<dbReference type="PhylomeDB" id="A6X565"/>
<dbReference type="Proteomes" id="UP000002301">
    <property type="component" value="Chromosome 2"/>
</dbReference>
<dbReference type="GO" id="GO:0016787">
    <property type="term" value="F:hydrolase activity"/>
    <property type="evidence" value="ECO:0007669"/>
    <property type="project" value="UniProtKB-UniRule"/>
</dbReference>
<dbReference type="Gene3D" id="3.60.15.10">
    <property type="entry name" value="Ribonuclease Z/Hydroxyacylglutathione hydrolase-like"/>
    <property type="match status" value="1"/>
</dbReference>
<dbReference type="HAMAP" id="MF_00457">
    <property type="entry name" value="UPF0173"/>
    <property type="match status" value="1"/>
</dbReference>
<dbReference type="InterPro" id="IPR001279">
    <property type="entry name" value="Metallo-B-lactamas"/>
</dbReference>
<dbReference type="InterPro" id="IPR036866">
    <property type="entry name" value="RibonucZ/Hydroxyglut_hydro"/>
</dbReference>
<dbReference type="InterPro" id="IPR022877">
    <property type="entry name" value="UPF0173"/>
</dbReference>
<dbReference type="InterPro" id="IPR050114">
    <property type="entry name" value="UPF0173_UPF0282_UlaG_hydrolase"/>
</dbReference>
<dbReference type="NCBIfam" id="NF001911">
    <property type="entry name" value="PRK00685.1"/>
    <property type="match status" value="1"/>
</dbReference>
<dbReference type="PANTHER" id="PTHR43546:SF3">
    <property type="entry name" value="UPF0173 METAL-DEPENDENT HYDROLASE MJ1163"/>
    <property type="match status" value="1"/>
</dbReference>
<dbReference type="PANTHER" id="PTHR43546">
    <property type="entry name" value="UPF0173 METAL-DEPENDENT HYDROLASE MJ1163-RELATED"/>
    <property type="match status" value="1"/>
</dbReference>
<dbReference type="Pfam" id="PF13483">
    <property type="entry name" value="Lactamase_B_3"/>
    <property type="match status" value="1"/>
</dbReference>
<dbReference type="SMART" id="SM00849">
    <property type="entry name" value="Lactamase_B"/>
    <property type="match status" value="1"/>
</dbReference>
<dbReference type="SUPFAM" id="SSF56281">
    <property type="entry name" value="Metallo-hydrolase/oxidoreductase"/>
    <property type="match status" value="1"/>
</dbReference>
<reference key="1">
    <citation type="journal article" date="2011" name="J. Bacteriol.">
        <title>Genome of Ochrobactrum anthropi ATCC 49188 T, a versatile opportunistic pathogen and symbiont of several eukaryotic hosts.</title>
        <authorList>
            <person name="Chain P.S."/>
            <person name="Lang D.M."/>
            <person name="Comerci D.J."/>
            <person name="Malfatti S.A."/>
            <person name="Vergez L.M."/>
            <person name="Shin M."/>
            <person name="Ugalde R.A."/>
            <person name="Garcia E."/>
            <person name="Tolmasky M.E."/>
        </authorList>
    </citation>
    <scope>NUCLEOTIDE SEQUENCE [LARGE SCALE GENOMIC DNA]</scope>
    <source>
        <strain>ATCC 49188 / DSM 6882 / CCUG 24695 / JCM 21032 / LMG 3331 / NBRC 15819 / NCTC 12168 / Alc 37</strain>
    </source>
</reference>
<gene>
    <name type="ordered locus">Oant_3663</name>
</gene>
<comment type="similarity">
    <text evidence="1">Belongs to the UPF0173 family.</text>
</comment>
<keyword id="KW-0378">Hydrolase</keyword>
<keyword id="KW-1185">Reference proteome</keyword>
<sequence>MKLTWLGHAAFRIETAKAVILIDPFLNGNPGAKGIDFKEATKGVTHIALTHGHGDHVGDTVAIAREHGAIVIANADLASWLGSQGVEKLDPGNTGGTVTHDGFTITFVNALHSSAMLTENGVSQALGNPNGLVFHFEDAPTLYHMGDTDIFSDMGLINELHQPEIGIVPIGDRFTMGGAVAALACQRYFNFKTVLPCHYASFPIIDQTADKFLAGMADHRETKVIADPAGTVHSF</sequence>
<feature type="chain" id="PRO_0000367194" description="UPF0173 metal-dependent hydrolase Oant_3663">
    <location>
        <begin position="1"/>
        <end position="235"/>
    </location>
</feature>
<evidence type="ECO:0000255" key="1">
    <source>
        <dbReference type="HAMAP-Rule" id="MF_00457"/>
    </source>
</evidence>
<protein>
    <recommendedName>
        <fullName evidence="1">UPF0173 metal-dependent hydrolase Oant_3663</fullName>
    </recommendedName>
</protein>
<proteinExistence type="inferred from homology"/>